<protein>
    <recommendedName>
        <fullName evidence="1">UDP-N-acetylglucosamine--N-acetylmuramyl-(pentapeptide) pyrophosphoryl-undecaprenol N-acetylglucosamine transferase</fullName>
        <ecNumber evidence="1">2.4.1.227</ecNumber>
    </recommendedName>
    <alternativeName>
        <fullName evidence="1">Undecaprenyl-PP-MurNAc-pentapeptide-UDPGlcNAc GlcNAc transferase</fullName>
    </alternativeName>
</protein>
<sequence length="357" mass="40219">MTKIAYTGGGTVGHVSVNLSLIPTSIEKGHEAFYIGSKHGIEREMIESQLPDIQYYPISSGKLRRYLSFENAKDVFKVLKGILDARKILKKQKPDLLFSKGGFVSVPVVIAARSLKIPTIIHESDLTPGLANKISLKFAKKIYTTFEDTLTYLPKDKADFVGATVREDLKQGNKERGYQLTDFDKNKKVLLVMGGSLGSKKLNNIIRQNIEALLHDYQIIHLTGKGLVDDSINKKGYVQFEFVKDDLTDLLAITDTVVSRAGSNAIYEFLSLRIPMLLIPLGLDQSRGDQIDNAKNFESKGYGRHIPEDQLTEVNLLQELNDIELHRESIIKQMETYQESYTKEDLFDKIIHDALNK</sequence>
<feature type="chain" id="PRO_0000109216" description="UDP-N-acetylglucosamine--N-acetylmuramyl-(pentapeptide) pyrophosphoryl-undecaprenol N-acetylglucosamine transferase">
    <location>
        <begin position="1"/>
        <end position="357"/>
    </location>
</feature>
<feature type="binding site" evidence="1">
    <location>
        <position position="166"/>
    </location>
    <ligand>
        <name>UDP-N-acetyl-alpha-D-glucosamine</name>
        <dbReference type="ChEBI" id="CHEBI:57705"/>
    </ligand>
</feature>
<feature type="binding site" evidence="1">
    <location>
        <position position="196"/>
    </location>
    <ligand>
        <name>UDP-N-acetyl-alpha-D-glucosamine</name>
        <dbReference type="ChEBI" id="CHEBI:57705"/>
    </ligand>
</feature>
<feature type="binding site" evidence="1">
    <location>
        <position position="290"/>
    </location>
    <ligand>
        <name>UDP-N-acetyl-alpha-D-glucosamine</name>
        <dbReference type="ChEBI" id="CHEBI:57705"/>
    </ligand>
</feature>
<comment type="function">
    <text evidence="1">Cell wall formation. Catalyzes the transfer of a GlcNAc subunit on undecaprenyl-pyrophosphoryl-MurNAc-pentapeptide (lipid intermediate I) to form undecaprenyl-pyrophosphoryl-MurNAc-(pentapeptide)GlcNAc (lipid intermediate II).</text>
</comment>
<comment type="catalytic activity">
    <reaction evidence="1">
        <text>Mur2Ac(oyl-L-Ala-gamma-D-Glu-L-Lys-D-Ala-D-Ala)-di-trans,octa-cis-undecaprenyl diphosphate + UDP-N-acetyl-alpha-D-glucosamine = beta-D-GlcNAc-(1-&gt;4)-Mur2Ac(oyl-L-Ala-gamma-D-Glu-L-Lys-D-Ala-D-Ala)-di-trans,octa-cis-undecaprenyl diphosphate + UDP + H(+)</text>
        <dbReference type="Rhea" id="RHEA:23192"/>
        <dbReference type="ChEBI" id="CHEBI:15378"/>
        <dbReference type="ChEBI" id="CHEBI:57705"/>
        <dbReference type="ChEBI" id="CHEBI:58223"/>
        <dbReference type="ChEBI" id="CHEBI:60032"/>
        <dbReference type="ChEBI" id="CHEBI:60033"/>
        <dbReference type="EC" id="2.4.1.227"/>
    </reaction>
</comment>
<comment type="pathway">
    <text evidence="1">Cell wall biogenesis; peptidoglycan biosynthesis.</text>
</comment>
<comment type="subcellular location">
    <subcellularLocation>
        <location evidence="1">Cell membrane</location>
        <topology evidence="1">Peripheral membrane protein</topology>
        <orientation evidence="1">Cytoplasmic side</orientation>
    </subcellularLocation>
</comment>
<comment type="similarity">
    <text evidence="1">Belongs to the glycosyltransferase 28 family. MurG subfamily.</text>
</comment>
<name>MURG_STAES</name>
<accession>Q8CMM3</accession>
<keyword id="KW-0131">Cell cycle</keyword>
<keyword id="KW-0132">Cell division</keyword>
<keyword id="KW-1003">Cell membrane</keyword>
<keyword id="KW-0133">Cell shape</keyword>
<keyword id="KW-0961">Cell wall biogenesis/degradation</keyword>
<keyword id="KW-0328">Glycosyltransferase</keyword>
<keyword id="KW-0472">Membrane</keyword>
<keyword id="KW-0573">Peptidoglycan synthesis</keyword>
<keyword id="KW-0808">Transferase</keyword>
<dbReference type="EC" id="2.4.1.227" evidence="1"/>
<dbReference type="EMBL" id="AE015929">
    <property type="protein sequence ID" value="AAO04707.1"/>
    <property type="molecule type" value="Genomic_DNA"/>
</dbReference>
<dbReference type="RefSeq" id="NP_764665.1">
    <property type="nucleotide sequence ID" value="NC_004461.1"/>
</dbReference>
<dbReference type="RefSeq" id="WP_001831309.1">
    <property type="nucleotide sequence ID" value="NZ_WBME01000002.1"/>
</dbReference>
<dbReference type="SMR" id="Q8CMM3"/>
<dbReference type="CAZy" id="GT28">
    <property type="family name" value="Glycosyltransferase Family 28"/>
</dbReference>
<dbReference type="DNASU" id="1057405"/>
<dbReference type="KEGG" id="sep:SE_1110"/>
<dbReference type="PATRIC" id="fig|176280.10.peg.1084"/>
<dbReference type="eggNOG" id="COG0707">
    <property type="taxonomic scope" value="Bacteria"/>
</dbReference>
<dbReference type="HOGENOM" id="CLU_037404_0_0_9"/>
<dbReference type="OrthoDB" id="9808936at2"/>
<dbReference type="UniPathway" id="UPA00219"/>
<dbReference type="Proteomes" id="UP000001411">
    <property type="component" value="Chromosome"/>
</dbReference>
<dbReference type="GO" id="GO:0005886">
    <property type="term" value="C:plasma membrane"/>
    <property type="evidence" value="ECO:0007669"/>
    <property type="project" value="UniProtKB-SubCell"/>
</dbReference>
<dbReference type="GO" id="GO:0050511">
    <property type="term" value="F:undecaprenyldiphospho-muramoylpentapeptide beta-N-acetylglucosaminyltransferase activity"/>
    <property type="evidence" value="ECO:0007669"/>
    <property type="project" value="UniProtKB-UniRule"/>
</dbReference>
<dbReference type="GO" id="GO:0005975">
    <property type="term" value="P:carbohydrate metabolic process"/>
    <property type="evidence" value="ECO:0007669"/>
    <property type="project" value="InterPro"/>
</dbReference>
<dbReference type="GO" id="GO:0051301">
    <property type="term" value="P:cell division"/>
    <property type="evidence" value="ECO:0007669"/>
    <property type="project" value="UniProtKB-KW"/>
</dbReference>
<dbReference type="GO" id="GO:0071555">
    <property type="term" value="P:cell wall organization"/>
    <property type="evidence" value="ECO:0007669"/>
    <property type="project" value="UniProtKB-KW"/>
</dbReference>
<dbReference type="GO" id="GO:0030259">
    <property type="term" value="P:lipid glycosylation"/>
    <property type="evidence" value="ECO:0007669"/>
    <property type="project" value="UniProtKB-UniRule"/>
</dbReference>
<dbReference type="GO" id="GO:0009252">
    <property type="term" value="P:peptidoglycan biosynthetic process"/>
    <property type="evidence" value="ECO:0007669"/>
    <property type="project" value="UniProtKB-UniRule"/>
</dbReference>
<dbReference type="GO" id="GO:0008360">
    <property type="term" value="P:regulation of cell shape"/>
    <property type="evidence" value="ECO:0007669"/>
    <property type="project" value="UniProtKB-KW"/>
</dbReference>
<dbReference type="CDD" id="cd03785">
    <property type="entry name" value="GT28_MurG"/>
    <property type="match status" value="1"/>
</dbReference>
<dbReference type="Gene3D" id="3.40.50.2000">
    <property type="entry name" value="Glycogen Phosphorylase B"/>
    <property type="match status" value="2"/>
</dbReference>
<dbReference type="HAMAP" id="MF_00033">
    <property type="entry name" value="MurG"/>
    <property type="match status" value="1"/>
</dbReference>
<dbReference type="InterPro" id="IPR006009">
    <property type="entry name" value="GlcNAc_MurG"/>
</dbReference>
<dbReference type="InterPro" id="IPR007235">
    <property type="entry name" value="Glyco_trans_28_C"/>
</dbReference>
<dbReference type="InterPro" id="IPR004276">
    <property type="entry name" value="GlycoTrans_28_N"/>
</dbReference>
<dbReference type="NCBIfam" id="NF009102">
    <property type="entry name" value="PRK12446.1"/>
    <property type="match status" value="1"/>
</dbReference>
<dbReference type="PANTHER" id="PTHR21015:SF27">
    <property type="entry name" value="UDP-N-ACETYLGLUCOSAMINE--N-ACETYLMURAMYL-(PENTAPEPTIDE) PYROPHOSPHORYL-UNDECAPRENOL N-ACETYLGLUCOSAMINE TRANSFERASE"/>
    <property type="match status" value="1"/>
</dbReference>
<dbReference type="PANTHER" id="PTHR21015">
    <property type="entry name" value="UDP-N-ACETYLGLUCOSAMINE--N-ACETYLMURAMYL-(PENTAPEPTIDE) PYROPHOSPHORYL-UNDECAPRENOL N-ACETYLGLUCOSAMINE TRANSFERASE 1"/>
    <property type="match status" value="1"/>
</dbReference>
<dbReference type="Pfam" id="PF04101">
    <property type="entry name" value="Glyco_tran_28_C"/>
    <property type="match status" value="1"/>
</dbReference>
<dbReference type="Pfam" id="PF03033">
    <property type="entry name" value="Glyco_transf_28"/>
    <property type="match status" value="1"/>
</dbReference>
<dbReference type="SUPFAM" id="SSF53756">
    <property type="entry name" value="UDP-Glycosyltransferase/glycogen phosphorylase"/>
    <property type="match status" value="1"/>
</dbReference>
<gene>
    <name evidence="1" type="primary">murG</name>
    <name type="ordered locus">SE_1110</name>
</gene>
<reference key="1">
    <citation type="journal article" date="2003" name="Mol. Microbiol.">
        <title>Genome-based analysis of virulence genes in a non-biofilm-forming Staphylococcus epidermidis strain (ATCC 12228).</title>
        <authorList>
            <person name="Zhang Y.-Q."/>
            <person name="Ren S.-X."/>
            <person name="Li H.-L."/>
            <person name="Wang Y.-X."/>
            <person name="Fu G."/>
            <person name="Yang J."/>
            <person name="Qin Z.-Q."/>
            <person name="Miao Y.-G."/>
            <person name="Wang W.-Y."/>
            <person name="Chen R.-S."/>
            <person name="Shen Y."/>
            <person name="Chen Z."/>
            <person name="Yuan Z.-H."/>
            <person name="Zhao G.-P."/>
            <person name="Qu D."/>
            <person name="Danchin A."/>
            <person name="Wen Y.-M."/>
        </authorList>
    </citation>
    <scope>NUCLEOTIDE SEQUENCE [LARGE SCALE GENOMIC DNA]</scope>
    <source>
        <strain>ATCC 12228 / FDA PCI 1200</strain>
    </source>
</reference>
<organism>
    <name type="scientific">Staphylococcus epidermidis (strain ATCC 12228 / FDA PCI 1200)</name>
    <dbReference type="NCBI Taxonomy" id="176280"/>
    <lineage>
        <taxon>Bacteria</taxon>
        <taxon>Bacillati</taxon>
        <taxon>Bacillota</taxon>
        <taxon>Bacilli</taxon>
        <taxon>Bacillales</taxon>
        <taxon>Staphylococcaceae</taxon>
        <taxon>Staphylococcus</taxon>
    </lineage>
</organism>
<evidence type="ECO:0000255" key="1">
    <source>
        <dbReference type="HAMAP-Rule" id="MF_00033"/>
    </source>
</evidence>
<proteinExistence type="inferred from homology"/>